<dbReference type="EMBL" id="BX950229">
    <property type="protein sequence ID" value="CAF30989.1"/>
    <property type="molecule type" value="Genomic_DNA"/>
</dbReference>
<dbReference type="RefSeq" id="WP_011171377.1">
    <property type="nucleotide sequence ID" value="NC_005791.1"/>
</dbReference>
<dbReference type="SMR" id="P62445"/>
<dbReference type="STRING" id="267377.MMP1433"/>
<dbReference type="EnsemblBacteria" id="CAF30989">
    <property type="protein sequence ID" value="CAF30989"/>
    <property type="gene ID" value="MMP1433"/>
</dbReference>
<dbReference type="KEGG" id="mmp:MMP1433"/>
<dbReference type="PATRIC" id="fig|267377.15.peg.1469"/>
<dbReference type="eggNOG" id="arCOG04372">
    <property type="taxonomic scope" value="Archaea"/>
</dbReference>
<dbReference type="HOGENOM" id="CLU_074237_4_0_2"/>
<dbReference type="OrthoDB" id="8842at2157"/>
<dbReference type="Proteomes" id="UP000000590">
    <property type="component" value="Chromosome"/>
</dbReference>
<dbReference type="GO" id="GO:0015934">
    <property type="term" value="C:large ribosomal subunit"/>
    <property type="evidence" value="ECO:0007669"/>
    <property type="project" value="TreeGrafter"/>
</dbReference>
<dbReference type="GO" id="GO:0070180">
    <property type="term" value="F:large ribosomal subunit rRNA binding"/>
    <property type="evidence" value="ECO:0007669"/>
    <property type="project" value="UniProtKB-UniRule"/>
</dbReference>
<dbReference type="GO" id="GO:0003735">
    <property type="term" value="F:structural constituent of ribosome"/>
    <property type="evidence" value="ECO:0007669"/>
    <property type="project" value="InterPro"/>
</dbReference>
<dbReference type="GO" id="GO:0006412">
    <property type="term" value="P:translation"/>
    <property type="evidence" value="ECO:0007669"/>
    <property type="project" value="UniProtKB-UniRule"/>
</dbReference>
<dbReference type="CDD" id="cd00349">
    <property type="entry name" value="Ribosomal_L11"/>
    <property type="match status" value="1"/>
</dbReference>
<dbReference type="FunFam" id="3.30.1550.10:FF:000007">
    <property type="entry name" value="50S ribosomal protein L11"/>
    <property type="match status" value="1"/>
</dbReference>
<dbReference type="Gene3D" id="1.10.10.250">
    <property type="entry name" value="Ribosomal protein L11, C-terminal domain"/>
    <property type="match status" value="1"/>
</dbReference>
<dbReference type="Gene3D" id="3.30.1550.10">
    <property type="entry name" value="Ribosomal protein L11/L12, N-terminal domain"/>
    <property type="match status" value="1"/>
</dbReference>
<dbReference type="HAMAP" id="MF_00736">
    <property type="entry name" value="Ribosomal_uL11"/>
    <property type="match status" value="1"/>
</dbReference>
<dbReference type="InterPro" id="IPR000911">
    <property type="entry name" value="Ribosomal_uL11"/>
</dbReference>
<dbReference type="InterPro" id="IPR020783">
    <property type="entry name" value="Ribosomal_uL11_C"/>
</dbReference>
<dbReference type="InterPro" id="IPR036769">
    <property type="entry name" value="Ribosomal_uL11_C_sf"/>
</dbReference>
<dbReference type="InterPro" id="IPR020785">
    <property type="entry name" value="Ribosomal_uL11_CS"/>
</dbReference>
<dbReference type="InterPro" id="IPR020784">
    <property type="entry name" value="Ribosomal_uL11_N"/>
</dbReference>
<dbReference type="InterPro" id="IPR036796">
    <property type="entry name" value="Ribosomal_uL11_N_sf"/>
</dbReference>
<dbReference type="NCBIfam" id="NF002232">
    <property type="entry name" value="PRK01143.1"/>
    <property type="match status" value="1"/>
</dbReference>
<dbReference type="PANTHER" id="PTHR11661">
    <property type="entry name" value="60S RIBOSOMAL PROTEIN L12"/>
    <property type="match status" value="1"/>
</dbReference>
<dbReference type="PANTHER" id="PTHR11661:SF1">
    <property type="entry name" value="LARGE RIBOSOMAL SUBUNIT PROTEIN UL11M"/>
    <property type="match status" value="1"/>
</dbReference>
<dbReference type="Pfam" id="PF00298">
    <property type="entry name" value="Ribosomal_L11"/>
    <property type="match status" value="1"/>
</dbReference>
<dbReference type="Pfam" id="PF03946">
    <property type="entry name" value="Ribosomal_L11_N"/>
    <property type="match status" value="1"/>
</dbReference>
<dbReference type="SMART" id="SM00649">
    <property type="entry name" value="RL11"/>
    <property type="match status" value="1"/>
</dbReference>
<dbReference type="SUPFAM" id="SSF54747">
    <property type="entry name" value="Ribosomal L11/L12e N-terminal domain"/>
    <property type="match status" value="1"/>
</dbReference>
<dbReference type="SUPFAM" id="SSF46906">
    <property type="entry name" value="Ribosomal protein L11, C-terminal domain"/>
    <property type="match status" value="1"/>
</dbReference>
<dbReference type="PROSITE" id="PS00359">
    <property type="entry name" value="RIBOSOMAL_L11"/>
    <property type="match status" value="1"/>
</dbReference>
<protein>
    <recommendedName>
        <fullName evidence="1">Large ribosomal subunit protein uL11</fullName>
    </recommendedName>
    <alternativeName>
        <fullName evidence="2">50S ribosomal protein L11</fullName>
    </alternativeName>
</protein>
<proteinExistence type="inferred from homology"/>
<organism>
    <name type="scientific">Methanococcus maripaludis (strain DSM 14266 / JCM 13030 / NBRC 101832 / S2 / LL)</name>
    <dbReference type="NCBI Taxonomy" id="267377"/>
    <lineage>
        <taxon>Archaea</taxon>
        <taxon>Methanobacteriati</taxon>
        <taxon>Methanobacteriota</taxon>
        <taxon>Methanomada group</taxon>
        <taxon>Methanococci</taxon>
        <taxon>Methanococcales</taxon>
        <taxon>Methanococcaceae</taxon>
        <taxon>Methanococcus</taxon>
    </lineage>
</organism>
<feature type="chain" id="PRO_0000104438" description="Large ribosomal subunit protein uL11">
    <location>
        <begin position="1"/>
        <end position="159"/>
    </location>
</feature>
<evidence type="ECO:0000255" key="1">
    <source>
        <dbReference type="HAMAP-Rule" id="MF_00736"/>
    </source>
</evidence>
<evidence type="ECO:0000305" key="2"/>
<reference key="1">
    <citation type="journal article" date="2004" name="J. Bacteriol.">
        <title>Complete genome sequence of the genetically tractable hydrogenotrophic methanogen Methanococcus maripaludis.</title>
        <authorList>
            <person name="Hendrickson E.L."/>
            <person name="Kaul R."/>
            <person name="Zhou Y."/>
            <person name="Bovee D."/>
            <person name="Chapman P."/>
            <person name="Chung J."/>
            <person name="Conway de Macario E."/>
            <person name="Dodsworth J.A."/>
            <person name="Gillett W."/>
            <person name="Graham D.E."/>
            <person name="Hackett M."/>
            <person name="Haydock A.K."/>
            <person name="Kang A."/>
            <person name="Land M.L."/>
            <person name="Levy R."/>
            <person name="Lie T.J."/>
            <person name="Major T.A."/>
            <person name="Moore B.C."/>
            <person name="Porat I."/>
            <person name="Palmeiri A."/>
            <person name="Rouse G."/>
            <person name="Saenphimmachak C."/>
            <person name="Soell D."/>
            <person name="Van Dien S."/>
            <person name="Wang T."/>
            <person name="Whitman W.B."/>
            <person name="Xia Q."/>
            <person name="Zhang Y."/>
            <person name="Larimer F.W."/>
            <person name="Olson M.V."/>
            <person name="Leigh J.A."/>
        </authorList>
    </citation>
    <scope>NUCLEOTIDE SEQUENCE [LARGE SCALE GENOMIC DNA]</scope>
    <source>
        <strain>DSM 14266 / JCM 13030 / NBRC 101832 / S2 / LL</strain>
    </source>
</reference>
<accession>P62445</accession>
<comment type="function">
    <text evidence="1">Forms part of the ribosomal stalk which helps the ribosome interact with GTP-bound translation factors.</text>
</comment>
<comment type="subunit">
    <text evidence="1">Part of the ribosomal stalk of the 50S ribosomal subunit. Interacts with L10 and the large rRNA to form the base of the stalk. L10 forms an elongated spine to which L12 dimers bind in a sequential fashion forming a multimeric L10(L12)X complex.</text>
</comment>
<comment type="similarity">
    <text evidence="1">Belongs to the universal ribosomal protein uL11 family.</text>
</comment>
<keyword id="KW-1185">Reference proteome</keyword>
<keyword id="KW-0687">Ribonucleoprotein</keyword>
<keyword id="KW-0689">Ribosomal protein</keyword>
<keyword id="KW-0694">RNA-binding</keyword>
<keyword id="KW-0699">rRNA-binding</keyword>
<sequence>MAEQVVEILVSGGKATAGPPLGPAIGPLGVNIMQVVQKINNMTKDYEGMSVPVKVIVDTDKRTFEVEVGIPPASALIKKEIGIEKGSQEPKHQVAGNITMEQIVKIAKMKQDAMLAYNLKNASKEVVGTCVSVGISVEGMTPSEAQKAIDAGQFDSYFN</sequence>
<name>RL11_METMP</name>
<gene>
    <name evidence="1" type="primary">rpl11</name>
    <name type="ordered locus">MMP1433</name>
</gene>